<organism>
    <name type="scientific">Human adenovirus C serotype 6</name>
    <name type="common">HAdV-6</name>
    <name type="synonym">Human adenovirus 6</name>
    <dbReference type="NCBI Taxonomy" id="10534"/>
    <lineage>
        <taxon>Viruses</taxon>
        <taxon>Varidnaviria</taxon>
        <taxon>Bamfordvirae</taxon>
        <taxon>Preplasmiviricota</taxon>
        <taxon>Tectiliviricetes</taxon>
        <taxon>Rowavirales</taxon>
        <taxon>Adenoviridae</taxon>
        <taxon>Mastadenovirus</taxon>
        <taxon>Human mastadenovirus C</taxon>
    </lineage>
</organism>
<accession>O55653</accession>
<evidence type="ECO:0000250" key="1"/>
<evidence type="ECO:0000255" key="2"/>
<evidence type="ECO:0000305" key="3"/>
<keyword id="KW-0244">Early protein</keyword>
<keyword id="KW-0325">Glycoprotein</keyword>
<keyword id="KW-1043">Host membrane</keyword>
<keyword id="KW-1048">Host nucleus</keyword>
<keyword id="KW-0472">Membrane</keyword>
<keyword id="KW-0812">Transmembrane</keyword>
<keyword id="KW-1133">Transmembrane helix</keyword>
<comment type="subcellular location">
    <subcellularLocation>
        <location>Host nucleus membrane</location>
        <topology>Single-pass membrane protein</topology>
    </subcellularLocation>
</comment>
<comment type="PTM">
    <text evidence="1">N-glycosylated and probably also O-glycosylated.</text>
</comment>
<comment type="similarity">
    <text evidence="3">Belongs to the adenoviridae E3A-1 family.</text>
</comment>
<proteinExistence type="inferred from homology"/>
<name>E311_ADE06</name>
<organismHost>
    <name type="scientific">Homo sapiens</name>
    <name type="common">Human</name>
    <dbReference type="NCBI Taxonomy" id="9606"/>
</organismHost>
<feature type="chain" id="PRO_0000221737" description="Early E3A 11.6 kDa glycoprotein">
    <location>
        <begin position="1"/>
        <end position="101"/>
    </location>
</feature>
<feature type="transmembrane region" description="Helical" evidence="2">
    <location>
        <begin position="41"/>
        <end position="62"/>
    </location>
</feature>
<feature type="glycosylation site" description="N-linked (GlcNAc...) asparagine; by host" evidence="2">
    <location>
        <position position="14"/>
    </location>
</feature>
<reference key="1">
    <citation type="submission" date="1997-12" db="EMBL/GenBank/DDBJ databases">
        <title>Sequence analysis of group C human adenoviruses type 1 and 6 for five genes of region E3.</title>
        <authorList>
            <person name="Reichmann H."/>
            <person name="Schaarschmidt E."/>
            <person name="Geisler B."/>
            <person name="Hausmann J."/>
            <person name="Ortmann D."/>
            <person name="Bauer U."/>
            <person name="Flunker G."/>
            <person name="Seidel W."/>
        </authorList>
    </citation>
    <scope>NUCLEOTIDE SEQUENCE [GENOMIC DNA]</scope>
</reference>
<sequence>MTGSTIAPTTDYRNTTATGLKSALNLPQVHAFVNDWASLGMWWFSIALMFVCLIIMWLICCLKRRRARPPIYRPIIVLNPHNEKIHRLDGLKPCSLLLQYD</sequence>
<protein>
    <recommendedName>
        <fullName>Early E3A 11.6 kDa glycoprotein</fullName>
    </recommendedName>
</protein>
<dbReference type="EMBL" id="Y16037">
    <property type="protein sequence ID" value="CAA75991.1"/>
    <property type="molecule type" value="Genomic_DNA"/>
</dbReference>
<dbReference type="SMR" id="O55653"/>
<dbReference type="GO" id="GO:0044200">
    <property type="term" value="C:host cell nuclear membrane"/>
    <property type="evidence" value="ECO:0007669"/>
    <property type="project" value="UniProtKB-SubCell"/>
</dbReference>
<dbReference type="GO" id="GO:0016020">
    <property type="term" value="C:membrane"/>
    <property type="evidence" value="ECO:0007669"/>
    <property type="project" value="UniProtKB-KW"/>
</dbReference>
<dbReference type="InterPro" id="IPR008652">
    <property type="entry name" value="Adenovirus_Type-2_E3A"/>
</dbReference>
<dbReference type="Pfam" id="PF05393">
    <property type="entry name" value="Hum_adeno_E3A"/>
    <property type="match status" value="1"/>
</dbReference>